<organism>
    <name type="scientific">Edwardsiella ictaluri (strain 93-146)</name>
    <dbReference type="NCBI Taxonomy" id="634503"/>
    <lineage>
        <taxon>Bacteria</taxon>
        <taxon>Pseudomonadati</taxon>
        <taxon>Pseudomonadota</taxon>
        <taxon>Gammaproteobacteria</taxon>
        <taxon>Enterobacterales</taxon>
        <taxon>Hafniaceae</taxon>
        <taxon>Edwardsiella</taxon>
    </lineage>
</organism>
<name>RNH_EDWI9</name>
<accession>C5BEV5</accession>
<gene>
    <name evidence="1" type="primary">rnhA</name>
    <name type="ordered locus">NT01EI_3194</name>
</gene>
<protein>
    <recommendedName>
        <fullName evidence="1">Ribonuclease H</fullName>
        <shortName evidence="1">RNase H</shortName>
        <ecNumber evidence="1">3.1.26.4</ecNumber>
    </recommendedName>
</protein>
<comment type="function">
    <text evidence="1">Endonuclease that specifically degrades the RNA of RNA-DNA hybrids.</text>
</comment>
<comment type="catalytic activity">
    <reaction evidence="1">
        <text>Endonucleolytic cleavage to 5'-phosphomonoester.</text>
        <dbReference type="EC" id="3.1.26.4"/>
    </reaction>
</comment>
<comment type="cofactor">
    <cofactor evidence="1">
        <name>Mg(2+)</name>
        <dbReference type="ChEBI" id="CHEBI:18420"/>
    </cofactor>
    <text evidence="1">Binds 1 Mg(2+) ion per subunit. May bind a second metal ion at a regulatory site, or after substrate binding.</text>
</comment>
<comment type="subunit">
    <text evidence="1">Monomer.</text>
</comment>
<comment type="subcellular location">
    <subcellularLocation>
        <location evidence="1">Cytoplasm</location>
    </subcellularLocation>
</comment>
<comment type="similarity">
    <text evidence="1">Belongs to the RNase H family.</text>
</comment>
<dbReference type="EC" id="3.1.26.4" evidence="1"/>
<dbReference type="EMBL" id="CP001600">
    <property type="protein sequence ID" value="ACR70343.1"/>
    <property type="molecule type" value="Genomic_DNA"/>
</dbReference>
<dbReference type="RefSeq" id="WP_015872430.1">
    <property type="nucleotide sequence ID" value="NZ_CP169062.1"/>
</dbReference>
<dbReference type="SMR" id="C5BEV5"/>
<dbReference type="STRING" id="67780.B6E78_07620"/>
<dbReference type="GeneID" id="69540062"/>
<dbReference type="KEGG" id="eic:NT01EI_3194"/>
<dbReference type="PATRIC" id="fig|634503.3.peg.2854"/>
<dbReference type="HOGENOM" id="CLU_030894_6_0_6"/>
<dbReference type="OrthoDB" id="7845843at2"/>
<dbReference type="Proteomes" id="UP000001485">
    <property type="component" value="Chromosome"/>
</dbReference>
<dbReference type="GO" id="GO:0005737">
    <property type="term" value="C:cytoplasm"/>
    <property type="evidence" value="ECO:0007669"/>
    <property type="project" value="UniProtKB-SubCell"/>
</dbReference>
<dbReference type="GO" id="GO:0000287">
    <property type="term" value="F:magnesium ion binding"/>
    <property type="evidence" value="ECO:0007669"/>
    <property type="project" value="UniProtKB-UniRule"/>
</dbReference>
<dbReference type="GO" id="GO:0003676">
    <property type="term" value="F:nucleic acid binding"/>
    <property type="evidence" value="ECO:0007669"/>
    <property type="project" value="InterPro"/>
</dbReference>
<dbReference type="GO" id="GO:0004523">
    <property type="term" value="F:RNA-DNA hybrid ribonuclease activity"/>
    <property type="evidence" value="ECO:0007669"/>
    <property type="project" value="UniProtKB-UniRule"/>
</dbReference>
<dbReference type="GO" id="GO:0043137">
    <property type="term" value="P:DNA replication, removal of RNA primer"/>
    <property type="evidence" value="ECO:0007669"/>
    <property type="project" value="TreeGrafter"/>
</dbReference>
<dbReference type="CDD" id="cd09278">
    <property type="entry name" value="RNase_HI_prokaryote_like"/>
    <property type="match status" value="1"/>
</dbReference>
<dbReference type="FunFam" id="3.30.420.10:FF:000008">
    <property type="entry name" value="Ribonuclease H"/>
    <property type="match status" value="1"/>
</dbReference>
<dbReference type="Gene3D" id="3.30.420.10">
    <property type="entry name" value="Ribonuclease H-like superfamily/Ribonuclease H"/>
    <property type="match status" value="1"/>
</dbReference>
<dbReference type="HAMAP" id="MF_00042">
    <property type="entry name" value="RNase_H"/>
    <property type="match status" value="1"/>
</dbReference>
<dbReference type="InterPro" id="IPR050092">
    <property type="entry name" value="RNase_H"/>
</dbReference>
<dbReference type="InterPro" id="IPR012337">
    <property type="entry name" value="RNaseH-like_sf"/>
</dbReference>
<dbReference type="InterPro" id="IPR002156">
    <property type="entry name" value="RNaseH_domain"/>
</dbReference>
<dbReference type="InterPro" id="IPR036397">
    <property type="entry name" value="RNaseH_sf"/>
</dbReference>
<dbReference type="InterPro" id="IPR022892">
    <property type="entry name" value="RNaseHI"/>
</dbReference>
<dbReference type="NCBIfam" id="NF001236">
    <property type="entry name" value="PRK00203.1"/>
    <property type="match status" value="1"/>
</dbReference>
<dbReference type="PANTHER" id="PTHR10642">
    <property type="entry name" value="RIBONUCLEASE H1"/>
    <property type="match status" value="1"/>
</dbReference>
<dbReference type="PANTHER" id="PTHR10642:SF26">
    <property type="entry name" value="RIBONUCLEASE H1"/>
    <property type="match status" value="1"/>
</dbReference>
<dbReference type="Pfam" id="PF00075">
    <property type="entry name" value="RNase_H"/>
    <property type="match status" value="1"/>
</dbReference>
<dbReference type="SUPFAM" id="SSF53098">
    <property type="entry name" value="Ribonuclease H-like"/>
    <property type="match status" value="1"/>
</dbReference>
<dbReference type="PROSITE" id="PS50879">
    <property type="entry name" value="RNASE_H_1"/>
    <property type="match status" value="1"/>
</dbReference>
<feature type="chain" id="PRO_1000202139" description="Ribonuclease H">
    <location>
        <begin position="1"/>
        <end position="154"/>
    </location>
</feature>
<feature type="domain" description="RNase H type-1" evidence="2">
    <location>
        <begin position="1"/>
        <end position="142"/>
    </location>
</feature>
<feature type="binding site" evidence="1">
    <location>
        <position position="10"/>
    </location>
    <ligand>
        <name>Mg(2+)</name>
        <dbReference type="ChEBI" id="CHEBI:18420"/>
        <label>1</label>
    </ligand>
</feature>
<feature type="binding site" evidence="1">
    <location>
        <position position="10"/>
    </location>
    <ligand>
        <name>Mg(2+)</name>
        <dbReference type="ChEBI" id="CHEBI:18420"/>
        <label>2</label>
    </ligand>
</feature>
<feature type="binding site" evidence="1">
    <location>
        <position position="48"/>
    </location>
    <ligand>
        <name>Mg(2+)</name>
        <dbReference type="ChEBI" id="CHEBI:18420"/>
        <label>1</label>
    </ligand>
</feature>
<feature type="binding site" evidence="1">
    <location>
        <position position="70"/>
    </location>
    <ligand>
        <name>Mg(2+)</name>
        <dbReference type="ChEBI" id="CHEBI:18420"/>
        <label>1</label>
    </ligand>
</feature>
<feature type="binding site" evidence="1">
    <location>
        <position position="134"/>
    </location>
    <ligand>
        <name>Mg(2+)</name>
        <dbReference type="ChEBI" id="CHEBI:18420"/>
        <label>2</label>
    </ligand>
</feature>
<sequence>MLKQVEIFTDGSCLGNPGPGGYGAILRYRQHEKALSAGYRLTTNNRMELMAAIVALETLTSACQVALFSDSQYVRQGITQWIHGWKRRDWKTADKKPVKNVDLWQRLDQAIGPHQVEWIWIKGHAGHPENERCDELARRAAGTPTQDDSGYTPG</sequence>
<evidence type="ECO:0000255" key="1">
    <source>
        <dbReference type="HAMAP-Rule" id="MF_00042"/>
    </source>
</evidence>
<evidence type="ECO:0000255" key="2">
    <source>
        <dbReference type="PROSITE-ProRule" id="PRU00408"/>
    </source>
</evidence>
<proteinExistence type="inferred from homology"/>
<keyword id="KW-0963">Cytoplasm</keyword>
<keyword id="KW-0255">Endonuclease</keyword>
<keyword id="KW-0378">Hydrolase</keyword>
<keyword id="KW-0460">Magnesium</keyword>
<keyword id="KW-0479">Metal-binding</keyword>
<keyword id="KW-0540">Nuclease</keyword>
<reference key="1">
    <citation type="submission" date="2009-03" db="EMBL/GenBank/DDBJ databases">
        <title>Complete genome sequence of Edwardsiella ictaluri 93-146.</title>
        <authorList>
            <person name="Williams M.L."/>
            <person name="Gillaspy A.F."/>
            <person name="Dyer D.W."/>
            <person name="Thune R.L."/>
            <person name="Waldbieser G.C."/>
            <person name="Schuster S.C."/>
            <person name="Gipson J."/>
            <person name="Zaitshik J."/>
            <person name="Landry C."/>
            <person name="Lawrence M.L."/>
        </authorList>
    </citation>
    <scope>NUCLEOTIDE SEQUENCE [LARGE SCALE GENOMIC DNA]</scope>
    <source>
        <strain>93-146</strain>
    </source>
</reference>